<gene>
    <name type="ordered locus">Sez_1447</name>
</gene>
<organism>
    <name type="scientific">Streptococcus equi subsp. zooepidemicus (strain MGCS10565)</name>
    <dbReference type="NCBI Taxonomy" id="552526"/>
    <lineage>
        <taxon>Bacteria</taxon>
        <taxon>Bacillati</taxon>
        <taxon>Bacillota</taxon>
        <taxon>Bacilli</taxon>
        <taxon>Lactobacillales</taxon>
        <taxon>Streptococcaceae</taxon>
        <taxon>Streptococcus</taxon>
    </lineage>
</organism>
<accession>B4U464</accession>
<evidence type="ECO:0000255" key="1">
    <source>
        <dbReference type="HAMAP-Rule" id="MF_01538"/>
    </source>
</evidence>
<protein>
    <recommendedName>
        <fullName evidence="1">UPF0346 protein Sez_1447</fullName>
    </recommendedName>
</protein>
<comment type="similarity">
    <text evidence="1">Belongs to the UPF0346 family.</text>
</comment>
<proteinExistence type="inferred from homology"/>
<name>Y1447_STREM</name>
<sequence>MRKAFYTWLMAQRHSTSNKPAALLADLVFEDTTFPKHTDDFETISRYLEEEASFAFNLGQFDQIWEDYLSH</sequence>
<feature type="chain" id="PRO_1000198690" description="UPF0346 protein Sez_1447">
    <location>
        <begin position="1"/>
        <end position="71"/>
    </location>
</feature>
<reference key="1">
    <citation type="journal article" date="2008" name="PLoS ONE">
        <title>Genome sequence of a lancefield group C Streptococcus zooepidemicus strain causing epidemic nephritis: new information about an old disease.</title>
        <authorList>
            <person name="Beres S.B."/>
            <person name="Sesso R."/>
            <person name="Pinto S.W.L."/>
            <person name="Hoe N.P."/>
            <person name="Porcella S.F."/>
            <person name="Deleo F.R."/>
            <person name="Musser J.M."/>
        </authorList>
    </citation>
    <scope>NUCLEOTIDE SEQUENCE [LARGE SCALE GENOMIC DNA]</scope>
    <source>
        <strain>MGCS10565</strain>
    </source>
</reference>
<dbReference type="EMBL" id="CP001129">
    <property type="protein sequence ID" value="ACG62781.1"/>
    <property type="molecule type" value="Genomic_DNA"/>
</dbReference>
<dbReference type="RefSeq" id="WP_012516043.1">
    <property type="nucleotide sequence ID" value="NC_011134.1"/>
</dbReference>
<dbReference type="SMR" id="B4U464"/>
<dbReference type="KEGG" id="sez:Sez_1447"/>
<dbReference type="HOGENOM" id="CLU_177534_1_0_9"/>
<dbReference type="Proteomes" id="UP000001873">
    <property type="component" value="Chromosome"/>
</dbReference>
<dbReference type="Gene3D" id="1.10.150.260">
    <property type="entry name" value="YozE SAM-like"/>
    <property type="match status" value="1"/>
</dbReference>
<dbReference type="HAMAP" id="MF_01538">
    <property type="entry name" value="UPF0346"/>
    <property type="match status" value="1"/>
</dbReference>
<dbReference type="InterPro" id="IPR010673">
    <property type="entry name" value="UPF0346"/>
</dbReference>
<dbReference type="InterPro" id="IPR023089">
    <property type="entry name" value="YozE_SAM-like"/>
</dbReference>
<dbReference type="InterPro" id="IPR036806">
    <property type="entry name" value="YozE_SAM-like_sf"/>
</dbReference>
<dbReference type="NCBIfam" id="NF010193">
    <property type="entry name" value="PRK13672.1"/>
    <property type="match status" value="1"/>
</dbReference>
<dbReference type="Pfam" id="PF06855">
    <property type="entry name" value="YozE_SAM_like"/>
    <property type="match status" value="1"/>
</dbReference>
<dbReference type="PIRSF" id="PIRSF037262">
    <property type="entry name" value="UCP037262"/>
    <property type="match status" value="1"/>
</dbReference>
<dbReference type="SUPFAM" id="SSF140652">
    <property type="entry name" value="YozE-like"/>
    <property type="match status" value="1"/>
</dbReference>